<reference key="1">
    <citation type="journal article" date="2008" name="PLoS ONE">
        <title>Genome sequence of the saprophyte Leptospira biflexa provides insights into the evolution of Leptospira and the pathogenesis of leptospirosis.</title>
        <authorList>
            <person name="Picardeau M."/>
            <person name="Bulach D.M."/>
            <person name="Bouchier C."/>
            <person name="Zuerner R.L."/>
            <person name="Zidane N."/>
            <person name="Wilson P.J."/>
            <person name="Creno S."/>
            <person name="Kuczek E.S."/>
            <person name="Bommezzadri S."/>
            <person name="Davis J.C."/>
            <person name="McGrath A."/>
            <person name="Johnson M.J."/>
            <person name="Boursaux-Eude C."/>
            <person name="Seemann T."/>
            <person name="Rouy Z."/>
            <person name="Coppel R.L."/>
            <person name="Rood J.I."/>
            <person name="Lajus A."/>
            <person name="Davies J.K."/>
            <person name="Medigue C."/>
            <person name="Adler B."/>
        </authorList>
    </citation>
    <scope>NUCLEOTIDE SEQUENCE [LARGE SCALE GENOMIC DNA]</scope>
    <source>
        <strain>Patoc 1 / ATCC 23582 / Paris</strain>
    </source>
</reference>
<organism>
    <name type="scientific">Leptospira biflexa serovar Patoc (strain Patoc 1 / ATCC 23582 / Paris)</name>
    <dbReference type="NCBI Taxonomy" id="456481"/>
    <lineage>
        <taxon>Bacteria</taxon>
        <taxon>Pseudomonadati</taxon>
        <taxon>Spirochaetota</taxon>
        <taxon>Spirochaetia</taxon>
        <taxon>Leptospirales</taxon>
        <taxon>Leptospiraceae</taxon>
        <taxon>Leptospira</taxon>
    </lineage>
</organism>
<evidence type="ECO:0000255" key="1">
    <source>
        <dbReference type="HAMAP-Rule" id="MF_00154"/>
    </source>
</evidence>
<evidence type="ECO:0000305" key="2"/>
<protein>
    <recommendedName>
        <fullName evidence="1">Protoheme IX farnesyltransferase</fullName>
        <ecNumber evidence="1">2.5.1.141</ecNumber>
    </recommendedName>
    <alternativeName>
        <fullName evidence="1">Heme B farnesyltransferase</fullName>
    </alternativeName>
    <alternativeName>
        <fullName evidence="1">Heme O synthase</fullName>
    </alternativeName>
</protein>
<gene>
    <name evidence="1" type="primary">ctaB</name>
    <name type="ordered locus">LEPBI_I2687</name>
</gene>
<feature type="chain" id="PRO_0000346053" description="Protoheme IX farnesyltransferase">
    <location>
        <begin position="1"/>
        <end position="284"/>
    </location>
</feature>
<feature type="transmembrane region" description="Helical" evidence="1">
    <location>
        <begin position="13"/>
        <end position="33"/>
    </location>
</feature>
<feature type="transmembrane region" description="Helical" evidence="1">
    <location>
        <begin position="35"/>
        <end position="55"/>
    </location>
</feature>
<feature type="transmembrane region" description="Helical" evidence="1">
    <location>
        <begin position="84"/>
        <end position="104"/>
    </location>
</feature>
<feature type="transmembrane region" description="Helical" evidence="1">
    <location>
        <begin position="106"/>
        <end position="126"/>
    </location>
</feature>
<feature type="transmembrane region" description="Helical" evidence="1">
    <location>
        <begin position="134"/>
        <end position="154"/>
    </location>
</feature>
<feature type="transmembrane region" description="Helical" evidence="1">
    <location>
        <begin position="163"/>
        <end position="183"/>
    </location>
</feature>
<feature type="transmembrane region" description="Helical" evidence="1">
    <location>
        <begin position="205"/>
        <end position="225"/>
    </location>
</feature>
<feature type="transmembrane region" description="Helical" evidence="1">
    <location>
        <begin position="229"/>
        <end position="249"/>
    </location>
</feature>
<feature type="transmembrane region" description="Helical" evidence="1">
    <location>
        <begin position="264"/>
        <end position="284"/>
    </location>
</feature>
<keyword id="KW-0997">Cell inner membrane</keyword>
<keyword id="KW-1003">Cell membrane</keyword>
<keyword id="KW-0350">Heme biosynthesis</keyword>
<keyword id="KW-0472">Membrane</keyword>
<keyword id="KW-1185">Reference proteome</keyword>
<keyword id="KW-0808">Transferase</keyword>
<keyword id="KW-0812">Transmembrane</keyword>
<keyword id="KW-1133">Transmembrane helix</keyword>
<dbReference type="EC" id="2.5.1.141" evidence="1"/>
<dbReference type="EMBL" id="CP000786">
    <property type="protein sequence ID" value="ABZ98765.1"/>
    <property type="status" value="ALT_INIT"/>
    <property type="molecule type" value="Genomic_DNA"/>
</dbReference>
<dbReference type="RefSeq" id="WP_041769886.1">
    <property type="nucleotide sequence ID" value="NC_010602.1"/>
</dbReference>
<dbReference type="SMR" id="B0SMP1"/>
<dbReference type="STRING" id="456481.LEPBI_I2687"/>
<dbReference type="KEGG" id="lbi:LEPBI_I2687"/>
<dbReference type="HOGENOM" id="CLU_029631_0_2_12"/>
<dbReference type="OrthoDB" id="9814417at2"/>
<dbReference type="BioCyc" id="LBIF456481:LEPBI_RS13215-MONOMER"/>
<dbReference type="UniPathway" id="UPA00834">
    <property type="reaction ID" value="UER00712"/>
</dbReference>
<dbReference type="Proteomes" id="UP000001847">
    <property type="component" value="Chromosome I"/>
</dbReference>
<dbReference type="GO" id="GO:0005886">
    <property type="term" value="C:plasma membrane"/>
    <property type="evidence" value="ECO:0007669"/>
    <property type="project" value="UniProtKB-SubCell"/>
</dbReference>
<dbReference type="GO" id="GO:0008495">
    <property type="term" value="F:protoheme IX farnesyltransferase activity"/>
    <property type="evidence" value="ECO:0007669"/>
    <property type="project" value="UniProtKB-UniRule"/>
</dbReference>
<dbReference type="GO" id="GO:0048034">
    <property type="term" value="P:heme O biosynthetic process"/>
    <property type="evidence" value="ECO:0007669"/>
    <property type="project" value="UniProtKB-UniRule"/>
</dbReference>
<dbReference type="CDD" id="cd13957">
    <property type="entry name" value="PT_UbiA_Cox10"/>
    <property type="match status" value="1"/>
</dbReference>
<dbReference type="FunFam" id="1.10.357.140:FF:000006">
    <property type="entry name" value="Protoheme IX farnesyltransferase, mitochondrial"/>
    <property type="match status" value="1"/>
</dbReference>
<dbReference type="Gene3D" id="1.10.357.140">
    <property type="entry name" value="UbiA prenyltransferase"/>
    <property type="match status" value="1"/>
</dbReference>
<dbReference type="HAMAP" id="MF_00154">
    <property type="entry name" value="CyoE_CtaB"/>
    <property type="match status" value="1"/>
</dbReference>
<dbReference type="InterPro" id="IPR006369">
    <property type="entry name" value="Protohaem_IX_farnesylTrfase"/>
</dbReference>
<dbReference type="InterPro" id="IPR000537">
    <property type="entry name" value="UbiA_prenyltransferase"/>
</dbReference>
<dbReference type="InterPro" id="IPR044878">
    <property type="entry name" value="UbiA_sf"/>
</dbReference>
<dbReference type="NCBIfam" id="TIGR01473">
    <property type="entry name" value="cyoE_ctaB"/>
    <property type="match status" value="1"/>
</dbReference>
<dbReference type="NCBIfam" id="NF003349">
    <property type="entry name" value="PRK04375.1-2"/>
    <property type="match status" value="1"/>
</dbReference>
<dbReference type="PANTHER" id="PTHR43448:SF7">
    <property type="entry name" value="4-HYDROXYBENZOATE SOLANESYLTRANSFERASE"/>
    <property type="match status" value="1"/>
</dbReference>
<dbReference type="PANTHER" id="PTHR43448">
    <property type="entry name" value="PROTOHEME IX FARNESYLTRANSFERASE, MITOCHONDRIAL"/>
    <property type="match status" value="1"/>
</dbReference>
<dbReference type="Pfam" id="PF01040">
    <property type="entry name" value="UbiA"/>
    <property type="match status" value="1"/>
</dbReference>
<proteinExistence type="inferred from homology"/>
<comment type="function">
    <text evidence="1">Converts heme B (protoheme IX) to heme O by substitution of the vinyl group on carbon 2 of heme B porphyrin ring with a hydroxyethyl farnesyl side group.</text>
</comment>
<comment type="catalytic activity">
    <reaction evidence="1">
        <text>heme b + (2E,6E)-farnesyl diphosphate + H2O = Fe(II)-heme o + diphosphate</text>
        <dbReference type="Rhea" id="RHEA:28070"/>
        <dbReference type="ChEBI" id="CHEBI:15377"/>
        <dbReference type="ChEBI" id="CHEBI:33019"/>
        <dbReference type="ChEBI" id="CHEBI:60344"/>
        <dbReference type="ChEBI" id="CHEBI:60530"/>
        <dbReference type="ChEBI" id="CHEBI:175763"/>
        <dbReference type="EC" id="2.5.1.141"/>
    </reaction>
</comment>
<comment type="pathway">
    <text evidence="1">Porphyrin-containing compound metabolism; heme O biosynthesis; heme O from protoheme: step 1/1.</text>
</comment>
<comment type="subcellular location">
    <subcellularLocation>
        <location evidence="1">Cell inner membrane</location>
        <topology evidence="1">Multi-pass membrane protein</topology>
    </subcellularLocation>
</comment>
<comment type="miscellaneous">
    <text evidence="1">Carbon 2 of the heme B porphyrin ring is defined according to the Fischer nomenclature.</text>
</comment>
<comment type="similarity">
    <text evidence="1">Belongs to the UbiA prenyltransferase family. Protoheme IX farnesyltransferase subfamily.</text>
</comment>
<comment type="sequence caution" evidence="2">
    <conflict type="erroneous initiation">
        <sequence resource="EMBL-CDS" id="ABZ98765"/>
    </conflict>
</comment>
<sequence length="284" mass="31890">MFRLWNQLTKPRVTVLVLATVLPGMYLGTTGYPSLTVISITLFGTYLMSSASFILNQYIERERDAVMYRTKQRPIPAGEISPTFALLLGIVVAIVSFGILTYFINLLTAVCALAALLLYVFLYTIWLKPRTEQNIVIGGISGCIGPLIGYAAMANALPMQAWVMFLMIFLWTPAHFWALAIFLKDDYEFAGIPMMPVVSGIEKTVNQIFLYAIAYSLSVIGFYFVDDRMGYLFLLSAIVLTVLILGFAYRLKLSMDKVLAKRFFFFSILHLFLVSIAIVIDSKI</sequence>
<accession>B0SMP1</accession>
<name>COXX_LEPBP</name>